<comment type="function">
    <text evidence="5">RNA replication protein replicates the viral genomic RNA. The central part of this protein possibly functions as an ATP-binding helicase and/or methyltransferase (Probable).</text>
</comment>
<comment type="catalytic activity">
    <reaction>
        <text>ATP + H2O = ADP + phosphate + H(+)</text>
        <dbReference type="Rhea" id="RHEA:13065"/>
        <dbReference type="ChEBI" id="CHEBI:15377"/>
        <dbReference type="ChEBI" id="CHEBI:15378"/>
        <dbReference type="ChEBI" id="CHEBI:30616"/>
        <dbReference type="ChEBI" id="CHEBI:43474"/>
        <dbReference type="ChEBI" id="CHEBI:456216"/>
        <dbReference type="EC" id="3.6.4.13"/>
    </reaction>
</comment>
<comment type="catalytic activity">
    <reaction evidence="2">
        <text>RNA(n) + a ribonucleoside 5'-triphosphate = RNA(n+1) + diphosphate</text>
        <dbReference type="Rhea" id="RHEA:21248"/>
        <dbReference type="Rhea" id="RHEA-COMP:14527"/>
        <dbReference type="Rhea" id="RHEA-COMP:17342"/>
        <dbReference type="ChEBI" id="CHEBI:33019"/>
        <dbReference type="ChEBI" id="CHEBI:61557"/>
        <dbReference type="ChEBI" id="CHEBI:140395"/>
        <dbReference type="EC" id="2.7.7.48"/>
    </reaction>
</comment>
<feature type="chain" id="PRO_0000402499" description="RNA replication protein">
    <location>
        <begin position="1"/>
        <end position="1896"/>
    </location>
</feature>
<feature type="domain" description="Alphavirus-like MT" evidence="3">
    <location>
        <begin position="60"/>
        <end position="227"/>
    </location>
</feature>
<feature type="domain" description="(+)RNA virus helicase ATP-binding">
    <location>
        <begin position="1025"/>
        <end position="1194"/>
    </location>
</feature>
<feature type="domain" description="(+)RNA virus helicase C-terminal">
    <location>
        <begin position="1195"/>
        <end position="1327"/>
    </location>
</feature>
<feature type="domain" description="RdRp catalytic" evidence="2">
    <location>
        <begin position="1668"/>
        <end position="1774"/>
    </location>
</feature>
<feature type="region of interest" description="Disordered" evidence="4">
    <location>
        <begin position="828"/>
        <end position="866"/>
    </location>
</feature>
<feature type="region of interest" description="Disordered" evidence="4">
    <location>
        <begin position="891"/>
        <end position="987"/>
    </location>
</feature>
<feature type="region of interest" description="Disordered" evidence="4">
    <location>
        <begin position="1347"/>
        <end position="1385"/>
    </location>
</feature>
<feature type="compositionally biased region" description="Pro residues" evidence="4">
    <location>
        <begin position="833"/>
        <end position="855"/>
    </location>
</feature>
<feature type="compositionally biased region" description="Low complexity" evidence="4">
    <location>
        <begin position="945"/>
        <end position="959"/>
    </location>
</feature>
<feature type="compositionally biased region" description="Polar residues" evidence="4">
    <location>
        <begin position="1369"/>
        <end position="1383"/>
    </location>
</feature>
<feature type="binding site" evidence="1">
    <location>
        <begin position="996"/>
        <end position="1003"/>
    </location>
    <ligand>
        <name>ATP</name>
        <dbReference type="ChEBI" id="CHEBI:30616"/>
    </ligand>
</feature>
<feature type="binding site" evidence="1">
    <location>
        <begin position="1059"/>
        <end position="1066"/>
    </location>
    <ligand>
        <name>ATP</name>
        <dbReference type="ChEBI" id="CHEBI:30616"/>
    </ligand>
</feature>
<evidence type="ECO:0000255" key="1"/>
<evidence type="ECO:0000255" key="2">
    <source>
        <dbReference type="PROSITE-ProRule" id="PRU00539"/>
    </source>
</evidence>
<evidence type="ECO:0000255" key="3">
    <source>
        <dbReference type="PROSITE-ProRule" id="PRU01079"/>
    </source>
</evidence>
<evidence type="ECO:0000256" key="4">
    <source>
        <dbReference type="SAM" id="MobiDB-lite"/>
    </source>
</evidence>
<evidence type="ECO:0000305" key="5"/>
<dbReference type="EC" id="2.7.7.48"/>
<dbReference type="EC" id="3.6.4.13"/>
<dbReference type="EC" id="2.1.1.-"/>
<dbReference type="EMBL" id="AF238884">
    <property type="protein sequence ID" value="AAG23416.1"/>
    <property type="molecule type" value="Genomic_RNA"/>
</dbReference>
<dbReference type="RefSeq" id="NP_068549.1">
    <property type="nucleotide sequence ID" value="NC_002604.1"/>
</dbReference>
<dbReference type="KEGG" id="vg:912251"/>
<dbReference type="Proteomes" id="UP000000398">
    <property type="component" value="Segment"/>
</dbReference>
<dbReference type="GO" id="GO:0005524">
    <property type="term" value="F:ATP binding"/>
    <property type="evidence" value="ECO:0007669"/>
    <property type="project" value="UniProtKB-KW"/>
</dbReference>
<dbReference type="GO" id="GO:0016887">
    <property type="term" value="F:ATP hydrolysis activity"/>
    <property type="evidence" value="ECO:0007669"/>
    <property type="project" value="RHEA"/>
</dbReference>
<dbReference type="GO" id="GO:0008174">
    <property type="term" value="F:mRNA methyltransferase activity"/>
    <property type="evidence" value="ECO:0007669"/>
    <property type="project" value="InterPro"/>
</dbReference>
<dbReference type="GO" id="GO:0003723">
    <property type="term" value="F:RNA binding"/>
    <property type="evidence" value="ECO:0007669"/>
    <property type="project" value="InterPro"/>
</dbReference>
<dbReference type="GO" id="GO:0003724">
    <property type="term" value="F:RNA helicase activity"/>
    <property type="evidence" value="ECO:0007669"/>
    <property type="project" value="UniProtKB-EC"/>
</dbReference>
<dbReference type="GO" id="GO:0003968">
    <property type="term" value="F:RNA-directed RNA polymerase activity"/>
    <property type="evidence" value="ECO:0007669"/>
    <property type="project" value="UniProtKB-KW"/>
</dbReference>
<dbReference type="GO" id="GO:0006351">
    <property type="term" value="P:DNA-templated transcription"/>
    <property type="evidence" value="ECO:0007669"/>
    <property type="project" value="InterPro"/>
</dbReference>
<dbReference type="GO" id="GO:0032259">
    <property type="term" value="P:methylation"/>
    <property type="evidence" value="ECO:0007669"/>
    <property type="project" value="UniProtKB-KW"/>
</dbReference>
<dbReference type="GO" id="GO:0016556">
    <property type="term" value="P:mRNA modification"/>
    <property type="evidence" value="ECO:0007669"/>
    <property type="project" value="InterPro"/>
</dbReference>
<dbReference type="GO" id="GO:0006396">
    <property type="term" value="P:RNA processing"/>
    <property type="evidence" value="ECO:0007669"/>
    <property type="project" value="InterPro"/>
</dbReference>
<dbReference type="GO" id="GO:0039694">
    <property type="term" value="P:viral RNA genome replication"/>
    <property type="evidence" value="ECO:0007669"/>
    <property type="project" value="InterPro"/>
</dbReference>
<dbReference type="CDD" id="cd23249">
    <property type="entry name" value="Gammaflexiviridae_RdRp"/>
    <property type="match status" value="1"/>
</dbReference>
<dbReference type="InterPro" id="IPR027351">
    <property type="entry name" value="(+)RNA_virus_helicase_core_dom"/>
</dbReference>
<dbReference type="InterPro" id="IPR002588">
    <property type="entry name" value="Alphavirus-like_MT_dom"/>
</dbReference>
<dbReference type="InterPro" id="IPR043502">
    <property type="entry name" value="DNA/RNA_pol_sf"/>
</dbReference>
<dbReference type="InterPro" id="IPR027417">
    <property type="entry name" value="P-loop_NTPase"/>
</dbReference>
<dbReference type="InterPro" id="IPR001788">
    <property type="entry name" value="RNA-dep_RNA_pol_alsuvir"/>
</dbReference>
<dbReference type="InterPro" id="IPR007094">
    <property type="entry name" value="RNA-dir_pol_PSvirus"/>
</dbReference>
<dbReference type="PANTHER" id="PTHR48125:SF12">
    <property type="entry name" value="AT HOOK TRANSCRIPTION FACTOR FAMILY-RELATED"/>
    <property type="match status" value="1"/>
</dbReference>
<dbReference type="PANTHER" id="PTHR48125">
    <property type="entry name" value="LP07818P1"/>
    <property type="match status" value="1"/>
</dbReference>
<dbReference type="Pfam" id="PF00978">
    <property type="entry name" value="RdRP_2"/>
    <property type="match status" value="1"/>
</dbReference>
<dbReference type="Pfam" id="PF01443">
    <property type="entry name" value="Viral_helicase1"/>
    <property type="match status" value="1"/>
</dbReference>
<dbReference type="Pfam" id="PF01660">
    <property type="entry name" value="Vmethyltransf"/>
    <property type="match status" value="1"/>
</dbReference>
<dbReference type="SUPFAM" id="SSF56672">
    <property type="entry name" value="DNA/RNA polymerases"/>
    <property type="match status" value="1"/>
</dbReference>
<dbReference type="SUPFAM" id="SSF52540">
    <property type="entry name" value="P-loop containing nucleoside triphosphate hydrolases"/>
    <property type="match status" value="1"/>
</dbReference>
<dbReference type="PROSITE" id="PS51743">
    <property type="entry name" value="ALPHAVIRUS_MT"/>
    <property type="match status" value="1"/>
</dbReference>
<dbReference type="PROSITE" id="PS51657">
    <property type="entry name" value="PSRV_HELICASE"/>
    <property type="match status" value="1"/>
</dbReference>
<dbReference type="PROSITE" id="PS50507">
    <property type="entry name" value="RDRP_SSRNA_POS"/>
    <property type="match status" value="1"/>
</dbReference>
<reference key="1">
    <citation type="journal article" date="2001" name="J. Gen. Virol.">
        <title>Genome characterization of Botrytis virus F, a flexuous rod-shaped mycovirus resembling plant 'potex-like' viruses.</title>
        <authorList>
            <person name="Howitt R.L."/>
            <person name="Beever R.E."/>
            <person name="Pearson M.N."/>
            <person name="Forster R.L."/>
        </authorList>
    </citation>
    <scope>NUCLEOTIDE SEQUENCE [GENOMIC RNA]</scope>
</reference>
<protein>
    <recommendedName>
        <fullName>RNA replication protein</fullName>
    </recommendedName>
    <domain>
        <recommendedName>
            <fullName>RNA-directed RNA polymerase</fullName>
            <ecNumber>2.7.7.48</ecNumber>
        </recommendedName>
    </domain>
    <domain>
        <recommendedName>
            <fullName>Helicase</fullName>
            <ecNumber>3.6.4.13</ecNumber>
        </recommendedName>
    </domain>
    <domain>
        <recommendedName>
            <fullName>Methyltransferase</fullName>
            <ecNumber>2.1.1.-</ecNumber>
        </recommendedName>
    </domain>
</protein>
<keyword id="KW-0067">ATP-binding</keyword>
<keyword id="KW-0347">Helicase</keyword>
<keyword id="KW-0378">Hydrolase</keyword>
<keyword id="KW-0489">Methyltransferase</keyword>
<keyword id="KW-0511">Multifunctional enzyme</keyword>
<keyword id="KW-0547">Nucleotide-binding</keyword>
<keyword id="KW-0548">Nucleotidyltransferase</keyword>
<keyword id="KW-1185">Reference proteome</keyword>
<keyword id="KW-0696">RNA-directed RNA polymerase</keyword>
<keyword id="KW-0808">Transferase</keyword>
<keyword id="KW-0693">Viral RNA replication</keyword>
<organism>
    <name type="scientific">Botrytis virus F (isolate Botrytis cinerea/New Zealand/Howitt/2001)</name>
    <name type="common">BotV-F</name>
    <dbReference type="NCBI Taxonomy" id="686946"/>
    <lineage>
        <taxon>Viruses</taxon>
        <taxon>Riboviria</taxon>
        <taxon>Orthornavirae</taxon>
        <taxon>Kitrinoviricota</taxon>
        <taxon>Alsuviricetes</taxon>
        <taxon>Tymovirales</taxon>
        <taxon>Gammaflexiviridae</taxon>
        <taxon>Mycoflexivirus</taxon>
        <taxon>Botrytis virus F</taxon>
    </lineage>
</organism>
<accession>Q9DRA1</accession>
<name>RDRP_BOTVF</name>
<sequence>MAVPLERAFASVTQSFHKDATQGPTTNEYLVARAETQRYAPYAVRKGPAALLAQVGINTIHDSPLSHSHPACYALNAFHFLKVIPRYLHGKAEVWGTKDNWFRKLQAQIDSQTTTLTHRNYAITARDHVRYPGTVVDHPGSCTAGTLFMHDALQYMTPLDVYTLFATSPEMHSLVATAVIPPESVDRLPAFWPELYQLAYYEDHLCYAPDGNFADAYNQPLAAHQWMTMKSLHGPDFTLSVDVPASRYSHHIFVISKRPGLPDTHRDFMCPDLVELPKDFFPGANKADKLLPRTLVNQMVEYAASVKRATIKDATSRTRAYVKDQKYAAVTPVQQMYLSWFGSGLSQMQFPDRPVTPLDNFATALWYRLLPSRLYRLPATIRNFQLKAFVDQLRTPQYLLHFKLDEYHLSSNDKYSDFYRNESRQASSKDMLSAFEAICFGGAPELEKKILGNNNPAPFATVPNPPSQTALGLATITAAIAFILPNRAARLTRLVARYAIRAVKEIVNPSFLTIPRFGLLSHSIASWLQTDGAVITYGLAPKIASWSAPIWYNAALLAPTDMRSCQVLVDIANDLRFDYRYGTMRLAVTLGLTLLNPFLRRLVLLPFKVLWHSYLPSIKNKLDSMVLMSISTLPDNISVPLLTLRGNLNRQRCPDNKDPTPIHESDDNSTADDKCLHCPIHCLKSKLSEPAASPDTVPEDNPLQEGDLTEEVYAAALAKKDTPPPYPTRNDCLLVALADGLLTKRILWFSCIKMFGNTACWVIHDTGKAFDWMHLKMLAEQLKLNVSIEVAAEHDHHWTGLAKRVGPIDGRKIALRWYPYHWELSDRGREDYGPPPPPPPPSTTEPPPPPNPPAASPYHSPTVEDEPLEEIPLANSNGEFSTFAFDDMAADDLNPAQPLSSLDLDEEPSAKQEPLEPAAIKTSEPEPLVPESEEVFFRPSPTPTPSDATPTPAARAPSSVSNENAQRPRHPLPPVPTGGASAPSNDKLNSAAKQYARLVAGKTRQMTVAQPRSKAYLRDLKRGNIGTIPTAEAEQLDAYIDSWAVNGFNRSVHVIYFCGLPGTGKSRRCMKMTERLLKENKYLAQTVRIVTPTDNLRNSVARQLKPPTESSYSVQTYETPIRQPSLGPVLIVDEYGKMPAGWLETVLFLNPRVQMVIFTADPTQGIFRTRIPDAYCCRIPSSTEAIASYAHEYRRVSDRPAPGVARALGLPTTSRRPGQIETSTELNVDWITVRPEGERAAWHNTWGGKVYTYATCQGETFHRAYQMVINGNTRFWDDRDLFAALTRGSGTLRLIYETQSSKPLPRSTSKLYNALLDFRTDPHKLPLAIEEHVNRYIPSHLRNVNQAVPRRNAASNPDALPSQRILPGGQSTTAEPXQSQASALPTGGEAIDVPALDRQDPQRFPQLKVLPHLCGYIGDYSEASYPEPEHPKTQMLDATFPTYLARNRGWNDPALTDAVTANYKAPEHRDIWVEAVGETTRQVHGSGDDRDVFLEHRGDDKATANITYAKRLRFSQRAANERSIAATKVAGSELFEAFTRAIPLPQETFNDSLLEECRTENDTVHLTSKPLATLINNAERSDPSWSLNMIKLFIKGQTVKKLEKMGSDATAGQSIASFRAEVLLAWGPYARYIDRRIRALLPPHVYIHSRRTNEDFEKFVAAHWDHTRESTDGDYTAYDASQDATFVNFETLLMRRLDFPLDIIEAYVEMKASITSHFGPLAIMRFSGEVWTYLFNTLGNIAFTYAKYEVPSVAQVYGGDDKSINSPITVRTGWSQLVGKFNLVEKPVVGYEPTFCGWRIVPGGIVKDPQLLFWRTRYARIRYDAALWAPGYYDELVLSLKTSDRLMDHMSPNDLAYLQALVRFYTKLSRRLPSLADRRRCNPLPADSPSVVLSRD</sequence>
<gene>
    <name type="ORF">ORF1</name>
</gene>
<organismHost>
    <name type="scientific">Botryotinia fuckeliana</name>
    <name type="common">Noble rot fungus</name>
    <name type="synonym">Botrytis cinerea</name>
    <dbReference type="NCBI Taxonomy" id="40559"/>
</organismHost>
<proteinExistence type="predicted"/>